<accession>Q45XH3</accession>
<protein>
    <recommendedName>
        <fullName>Hemoglobin subunit epsilon</fullName>
    </recommendedName>
    <alternativeName>
        <fullName>Epsilon-globin</fullName>
    </alternativeName>
    <alternativeName>
        <fullName>Hemoglobin epsilon chain</fullName>
    </alternativeName>
</protein>
<sequence length="147" mass="16156">MVHFTAEEKATVASLWGKVNVEEAGGEVLGRLLVVYPWTQRFFDNFGNLSSSSAIMGNPKVKAHGKKVLTSFGDAVKHMDDLKGTFAHLSELHCDKLHVDPENFRLLGNVMVVVLASHFGKEFTPEVQAAWQKLVGGVANALAHKYH</sequence>
<evidence type="ECO:0000250" key="1">
    <source>
        <dbReference type="UniProtKB" id="P02100"/>
    </source>
</evidence>
<evidence type="ECO:0000255" key="2">
    <source>
        <dbReference type="PROSITE-ProRule" id="PRU00238"/>
    </source>
</evidence>
<name>HBE_BRATR</name>
<proteinExistence type="evidence at transcript level"/>
<keyword id="KW-0349">Heme</keyword>
<keyword id="KW-0408">Iron</keyword>
<keyword id="KW-0479">Metal-binding</keyword>
<keyword id="KW-0561">Oxygen transport</keyword>
<keyword id="KW-0597">Phosphoprotein</keyword>
<keyword id="KW-0813">Transport</keyword>
<comment type="function">
    <text>The epsilon chain is a beta-type chain of early mammalian embryonic hemoglobin.</text>
</comment>
<comment type="subunit">
    <text>Heterotetramer of two alpha chains and two epsilon chains in early embryonic hemoglobin Gower-2; two zeta chains and two epsilon chains in early embryonic hemoglobin Gower-1.</text>
</comment>
<comment type="tissue specificity">
    <text>Red blood cells.</text>
</comment>
<comment type="similarity">
    <text evidence="2">Belongs to the globin family.</text>
</comment>
<dbReference type="EMBL" id="DQ091220">
    <property type="protein sequence ID" value="AAZ22691.1"/>
    <property type="molecule type" value="Genomic_DNA"/>
</dbReference>
<dbReference type="SMR" id="Q45XH3"/>
<dbReference type="GO" id="GO:0072562">
    <property type="term" value="C:blood microparticle"/>
    <property type="evidence" value="ECO:0007669"/>
    <property type="project" value="TreeGrafter"/>
</dbReference>
<dbReference type="GO" id="GO:0031838">
    <property type="term" value="C:haptoglobin-hemoglobin complex"/>
    <property type="evidence" value="ECO:0007669"/>
    <property type="project" value="TreeGrafter"/>
</dbReference>
<dbReference type="GO" id="GO:0005833">
    <property type="term" value="C:hemoglobin complex"/>
    <property type="evidence" value="ECO:0007669"/>
    <property type="project" value="InterPro"/>
</dbReference>
<dbReference type="GO" id="GO:0031720">
    <property type="term" value="F:haptoglobin binding"/>
    <property type="evidence" value="ECO:0007669"/>
    <property type="project" value="TreeGrafter"/>
</dbReference>
<dbReference type="GO" id="GO:0020037">
    <property type="term" value="F:heme binding"/>
    <property type="evidence" value="ECO:0007669"/>
    <property type="project" value="InterPro"/>
</dbReference>
<dbReference type="GO" id="GO:0031721">
    <property type="term" value="F:hemoglobin alpha binding"/>
    <property type="evidence" value="ECO:0007669"/>
    <property type="project" value="TreeGrafter"/>
</dbReference>
<dbReference type="GO" id="GO:0046872">
    <property type="term" value="F:metal ion binding"/>
    <property type="evidence" value="ECO:0007669"/>
    <property type="project" value="UniProtKB-KW"/>
</dbReference>
<dbReference type="GO" id="GO:0043177">
    <property type="term" value="F:organic acid binding"/>
    <property type="evidence" value="ECO:0007669"/>
    <property type="project" value="TreeGrafter"/>
</dbReference>
<dbReference type="GO" id="GO:0019825">
    <property type="term" value="F:oxygen binding"/>
    <property type="evidence" value="ECO:0007669"/>
    <property type="project" value="InterPro"/>
</dbReference>
<dbReference type="GO" id="GO:0005344">
    <property type="term" value="F:oxygen carrier activity"/>
    <property type="evidence" value="ECO:0007669"/>
    <property type="project" value="UniProtKB-KW"/>
</dbReference>
<dbReference type="GO" id="GO:0004601">
    <property type="term" value="F:peroxidase activity"/>
    <property type="evidence" value="ECO:0007669"/>
    <property type="project" value="TreeGrafter"/>
</dbReference>
<dbReference type="GO" id="GO:0042744">
    <property type="term" value="P:hydrogen peroxide catabolic process"/>
    <property type="evidence" value="ECO:0007669"/>
    <property type="project" value="TreeGrafter"/>
</dbReference>
<dbReference type="CDD" id="cd08925">
    <property type="entry name" value="Hb-beta-like"/>
    <property type="match status" value="1"/>
</dbReference>
<dbReference type="FunFam" id="1.10.490.10:FF:000001">
    <property type="entry name" value="Hemoglobin subunit beta"/>
    <property type="match status" value="1"/>
</dbReference>
<dbReference type="Gene3D" id="1.10.490.10">
    <property type="entry name" value="Globins"/>
    <property type="match status" value="1"/>
</dbReference>
<dbReference type="InterPro" id="IPR000971">
    <property type="entry name" value="Globin"/>
</dbReference>
<dbReference type="InterPro" id="IPR009050">
    <property type="entry name" value="Globin-like_sf"/>
</dbReference>
<dbReference type="InterPro" id="IPR012292">
    <property type="entry name" value="Globin/Proto"/>
</dbReference>
<dbReference type="InterPro" id="IPR002337">
    <property type="entry name" value="Hemoglobin_b"/>
</dbReference>
<dbReference type="InterPro" id="IPR050056">
    <property type="entry name" value="Hemoglobin_oxygen_transport"/>
</dbReference>
<dbReference type="PANTHER" id="PTHR11442">
    <property type="entry name" value="HEMOGLOBIN FAMILY MEMBER"/>
    <property type="match status" value="1"/>
</dbReference>
<dbReference type="PANTHER" id="PTHR11442:SF35">
    <property type="entry name" value="HEMOGLOBIN SUBUNIT EPSILON-2"/>
    <property type="match status" value="1"/>
</dbReference>
<dbReference type="Pfam" id="PF00042">
    <property type="entry name" value="Globin"/>
    <property type="match status" value="1"/>
</dbReference>
<dbReference type="PRINTS" id="PR00814">
    <property type="entry name" value="BETAHAEM"/>
</dbReference>
<dbReference type="SUPFAM" id="SSF46458">
    <property type="entry name" value="Globin-like"/>
    <property type="match status" value="1"/>
</dbReference>
<dbReference type="PROSITE" id="PS01033">
    <property type="entry name" value="GLOBIN"/>
    <property type="match status" value="1"/>
</dbReference>
<reference key="1">
    <citation type="submission" date="2005-06" db="EMBL/GenBank/DDBJ databases">
        <title>Atypical molecular evolution of afrotherian and xenarthran beta-globin cluster genes.</title>
        <authorList>
            <person name="Sloan A.M."/>
            <person name="Campbell K.L."/>
        </authorList>
    </citation>
    <scope>NUCLEOTIDE SEQUENCE [GENOMIC DNA]</scope>
</reference>
<gene>
    <name type="primary">HBE1</name>
</gene>
<feature type="chain" id="PRO_0000053190" description="Hemoglobin subunit epsilon">
    <location>
        <begin position="1"/>
        <end position="147"/>
    </location>
</feature>
<feature type="domain" description="Globin" evidence="2">
    <location>
        <begin position="3"/>
        <end position="147"/>
    </location>
</feature>
<feature type="binding site" description="distal binding residue" evidence="2">
    <location>
        <position position="64"/>
    </location>
    <ligand>
        <name>heme b</name>
        <dbReference type="ChEBI" id="CHEBI:60344"/>
    </ligand>
    <ligandPart>
        <name>Fe</name>
        <dbReference type="ChEBI" id="CHEBI:18248"/>
    </ligandPart>
</feature>
<feature type="binding site" description="proximal binding residue" evidence="2">
    <location>
        <position position="93"/>
    </location>
    <ligand>
        <name>heme b</name>
        <dbReference type="ChEBI" id="CHEBI:60344"/>
    </ligand>
    <ligandPart>
        <name>Fe</name>
        <dbReference type="ChEBI" id="CHEBI:18248"/>
    </ligandPart>
</feature>
<feature type="modified residue" description="Phosphoserine" evidence="1">
    <location>
        <position position="14"/>
    </location>
</feature>
<feature type="modified residue" description="Phosphoserine" evidence="1">
    <location>
        <position position="51"/>
    </location>
</feature>
<organism>
    <name type="scientific">Bradypus tridactylus</name>
    <name type="common">Pale-throated three-toed sloth</name>
    <dbReference type="NCBI Taxonomy" id="9354"/>
    <lineage>
        <taxon>Eukaryota</taxon>
        <taxon>Metazoa</taxon>
        <taxon>Chordata</taxon>
        <taxon>Craniata</taxon>
        <taxon>Vertebrata</taxon>
        <taxon>Euteleostomi</taxon>
        <taxon>Mammalia</taxon>
        <taxon>Eutheria</taxon>
        <taxon>Xenarthra</taxon>
        <taxon>Pilosa</taxon>
        <taxon>Folivora</taxon>
        <taxon>Bradypodidae</taxon>
        <taxon>Bradypus</taxon>
    </lineage>
</organism>